<reference key="1">
    <citation type="journal article" date="2001" name="Nature">
        <title>Genome sequence of Yersinia pestis, the causative agent of plague.</title>
        <authorList>
            <person name="Parkhill J."/>
            <person name="Wren B.W."/>
            <person name="Thomson N.R."/>
            <person name="Titball R.W."/>
            <person name="Holden M.T.G."/>
            <person name="Prentice M.B."/>
            <person name="Sebaihia M."/>
            <person name="James K.D."/>
            <person name="Churcher C.M."/>
            <person name="Mungall K.L."/>
            <person name="Baker S."/>
            <person name="Basham D."/>
            <person name="Bentley S.D."/>
            <person name="Brooks K."/>
            <person name="Cerdeno-Tarraga A.-M."/>
            <person name="Chillingworth T."/>
            <person name="Cronin A."/>
            <person name="Davies R.M."/>
            <person name="Davis P."/>
            <person name="Dougan G."/>
            <person name="Feltwell T."/>
            <person name="Hamlin N."/>
            <person name="Holroyd S."/>
            <person name="Jagels K."/>
            <person name="Karlyshev A.V."/>
            <person name="Leather S."/>
            <person name="Moule S."/>
            <person name="Oyston P.C.F."/>
            <person name="Quail M.A."/>
            <person name="Rutherford K.M."/>
            <person name="Simmonds M."/>
            <person name="Skelton J."/>
            <person name="Stevens K."/>
            <person name="Whitehead S."/>
            <person name="Barrell B.G."/>
        </authorList>
    </citation>
    <scope>NUCLEOTIDE SEQUENCE [LARGE SCALE GENOMIC DNA]</scope>
    <source>
        <strain>CO-92 / Biovar Orientalis</strain>
    </source>
</reference>
<reference key="2">
    <citation type="journal article" date="2002" name="J. Bacteriol.">
        <title>Genome sequence of Yersinia pestis KIM.</title>
        <authorList>
            <person name="Deng W."/>
            <person name="Burland V."/>
            <person name="Plunkett G. III"/>
            <person name="Boutin A."/>
            <person name="Mayhew G.F."/>
            <person name="Liss P."/>
            <person name="Perna N.T."/>
            <person name="Rose D.J."/>
            <person name="Mau B."/>
            <person name="Zhou S."/>
            <person name="Schwartz D.C."/>
            <person name="Fetherston J.D."/>
            <person name="Lindler L.E."/>
            <person name="Brubaker R.R."/>
            <person name="Plano G.V."/>
            <person name="Straley S.C."/>
            <person name="McDonough K.A."/>
            <person name="Nilles M.L."/>
            <person name="Matson J.S."/>
            <person name="Blattner F.R."/>
            <person name="Perry R.D."/>
        </authorList>
    </citation>
    <scope>NUCLEOTIDE SEQUENCE [LARGE SCALE GENOMIC DNA]</scope>
    <source>
        <strain>KIM10+ / Biovar Mediaevalis</strain>
    </source>
</reference>
<reference key="3">
    <citation type="journal article" date="2004" name="DNA Res.">
        <title>Complete genome sequence of Yersinia pestis strain 91001, an isolate avirulent to humans.</title>
        <authorList>
            <person name="Song Y."/>
            <person name="Tong Z."/>
            <person name="Wang J."/>
            <person name="Wang L."/>
            <person name="Guo Z."/>
            <person name="Han Y."/>
            <person name="Zhang J."/>
            <person name="Pei D."/>
            <person name="Zhou D."/>
            <person name="Qin H."/>
            <person name="Pang X."/>
            <person name="Han Y."/>
            <person name="Zhai J."/>
            <person name="Li M."/>
            <person name="Cui B."/>
            <person name="Qi Z."/>
            <person name="Jin L."/>
            <person name="Dai R."/>
            <person name="Chen F."/>
            <person name="Li S."/>
            <person name="Ye C."/>
            <person name="Du Z."/>
            <person name="Lin W."/>
            <person name="Wang J."/>
            <person name="Yu J."/>
            <person name="Yang H."/>
            <person name="Wang J."/>
            <person name="Huang P."/>
            <person name="Yang R."/>
        </authorList>
    </citation>
    <scope>NUCLEOTIDE SEQUENCE [LARGE SCALE GENOMIC DNA]</scope>
    <source>
        <strain>91001 / Biovar Mediaevalis</strain>
    </source>
</reference>
<sequence length="294" mass="31477">MQARFHTSWAELPASLQFALEPILSAENFPAMLTAEQVKTVKNISGLDDDALAFALLPLATACALTPISHFNVGAIARGKSGNFYFGANMEFRGVPLQQTIHAEQCAVTHAWLRGETNLVAITVNYTPCGHCRQFMNELNSGSELHIHLPGRPPSTLGQYLPDSFGPTDLAITTLLMDPVNHGYTLAETDPLTQAALNAANHSHAPYSQSHSGVALETTNGKIYAGRYAENAAFNPSLPPLQAALILANITGENCASIRRAVLVEGHNAVTSQWDTTLATLNALGCSAVKRVTF</sequence>
<organism>
    <name type="scientific">Yersinia pestis</name>
    <dbReference type="NCBI Taxonomy" id="632"/>
    <lineage>
        <taxon>Bacteria</taxon>
        <taxon>Pseudomonadati</taxon>
        <taxon>Pseudomonadota</taxon>
        <taxon>Gammaproteobacteria</taxon>
        <taxon>Enterobacterales</taxon>
        <taxon>Yersiniaceae</taxon>
        <taxon>Yersinia</taxon>
    </lineage>
</organism>
<feature type="chain" id="PRO_0000171674" description="Cytidine deaminase">
    <location>
        <begin position="1"/>
        <end position="294"/>
    </location>
</feature>
<feature type="domain" description="CMP/dCMP-type deaminase 1" evidence="2">
    <location>
        <begin position="48"/>
        <end position="168"/>
    </location>
</feature>
<feature type="domain" description="CMP/dCMP-type deaminase 2" evidence="2">
    <location>
        <begin position="187"/>
        <end position="294"/>
    </location>
</feature>
<feature type="active site" description="Proton donor" evidence="1">
    <location>
        <position position="104"/>
    </location>
</feature>
<feature type="binding site" evidence="1">
    <location>
        <begin position="89"/>
        <end position="91"/>
    </location>
    <ligand>
        <name>substrate</name>
    </ligand>
</feature>
<feature type="binding site" evidence="1">
    <location>
        <position position="102"/>
    </location>
    <ligand>
        <name>Zn(2+)</name>
        <dbReference type="ChEBI" id="CHEBI:29105"/>
        <note>catalytic</note>
    </ligand>
</feature>
<feature type="binding site" evidence="1">
    <location>
        <position position="129"/>
    </location>
    <ligand>
        <name>Zn(2+)</name>
        <dbReference type="ChEBI" id="CHEBI:29105"/>
        <note>catalytic</note>
    </ligand>
</feature>
<feature type="binding site" evidence="1">
    <location>
        <position position="132"/>
    </location>
    <ligand>
        <name>Zn(2+)</name>
        <dbReference type="ChEBI" id="CHEBI:29105"/>
        <note>catalytic</note>
    </ligand>
</feature>
<accession>Q8ZG08</accession>
<accession>Q0WGR0</accession>
<accession>Q74VB0</accession>
<accession>Q7CHQ6</accession>
<comment type="function">
    <text evidence="1">This enzyme scavenges exogenous and endogenous cytidine and 2'-deoxycytidine for UMP synthesis.</text>
</comment>
<comment type="catalytic activity">
    <reaction evidence="1">
        <text>cytidine + H2O + H(+) = uridine + NH4(+)</text>
        <dbReference type="Rhea" id="RHEA:16069"/>
        <dbReference type="ChEBI" id="CHEBI:15377"/>
        <dbReference type="ChEBI" id="CHEBI:15378"/>
        <dbReference type="ChEBI" id="CHEBI:16704"/>
        <dbReference type="ChEBI" id="CHEBI:17562"/>
        <dbReference type="ChEBI" id="CHEBI:28938"/>
        <dbReference type="EC" id="3.5.4.5"/>
    </reaction>
</comment>
<comment type="catalytic activity">
    <reaction evidence="1">
        <text>2'-deoxycytidine + H2O + H(+) = 2'-deoxyuridine + NH4(+)</text>
        <dbReference type="Rhea" id="RHEA:13433"/>
        <dbReference type="ChEBI" id="CHEBI:15377"/>
        <dbReference type="ChEBI" id="CHEBI:15378"/>
        <dbReference type="ChEBI" id="CHEBI:15698"/>
        <dbReference type="ChEBI" id="CHEBI:16450"/>
        <dbReference type="ChEBI" id="CHEBI:28938"/>
        <dbReference type="EC" id="3.5.4.5"/>
    </reaction>
</comment>
<comment type="cofactor">
    <cofactor evidence="1">
        <name>Zn(2+)</name>
        <dbReference type="ChEBI" id="CHEBI:29105"/>
    </cofactor>
    <text evidence="1">Binds 1 zinc ion.</text>
</comment>
<comment type="subunit">
    <text evidence="1">Homodimer.</text>
</comment>
<comment type="similarity">
    <text evidence="1">Belongs to the cytidine and deoxycytidylate deaminase family.</text>
</comment>
<dbReference type="EC" id="3.5.4.5" evidence="1"/>
<dbReference type="EMBL" id="AL590842">
    <property type="protein sequence ID" value="CAL20158.1"/>
    <property type="molecule type" value="Genomic_DNA"/>
</dbReference>
<dbReference type="EMBL" id="AE009952">
    <property type="protein sequence ID" value="AAM86209.1"/>
    <property type="molecule type" value="Genomic_DNA"/>
</dbReference>
<dbReference type="EMBL" id="AE017042">
    <property type="protein sequence ID" value="AAS61643.1"/>
    <property type="molecule type" value="Genomic_DNA"/>
</dbReference>
<dbReference type="PIR" id="AD0184">
    <property type="entry name" value="AD0184"/>
</dbReference>
<dbReference type="RefSeq" id="WP_002211969.1">
    <property type="nucleotide sequence ID" value="NZ_WUCM01000063.1"/>
</dbReference>
<dbReference type="RefSeq" id="YP_002346528.1">
    <property type="nucleotide sequence ID" value="NC_003143.1"/>
</dbReference>
<dbReference type="SMR" id="Q8ZG08"/>
<dbReference type="STRING" id="214092.YPO1512"/>
<dbReference type="PaxDb" id="214092-YPO1512"/>
<dbReference type="DNASU" id="1147603"/>
<dbReference type="EnsemblBacteria" id="AAS61643">
    <property type="protein sequence ID" value="AAS61643"/>
    <property type="gene ID" value="YP_1402"/>
</dbReference>
<dbReference type="GeneID" id="57977056"/>
<dbReference type="KEGG" id="ype:YPO1512"/>
<dbReference type="KEGG" id="ypk:y2657"/>
<dbReference type="KEGG" id="ypm:YP_1402"/>
<dbReference type="PATRIC" id="fig|214092.21.peg.1845"/>
<dbReference type="eggNOG" id="COG0295">
    <property type="taxonomic scope" value="Bacteria"/>
</dbReference>
<dbReference type="HOGENOM" id="CLU_052424_0_0_6"/>
<dbReference type="OMA" id="NYSPCGH"/>
<dbReference type="OrthoDB" id="9795347at2"/>
<dbReference type="Proteomes" id="UP000000815">
    <property type="component" value="Chromosome"/>
</dbReference>
<dbReference type="Proteomes" id="UP000001019">
    <property type="component" value="Chromosome"/>
</dbReference>
<dbReference type="Proteomes" id="UP000002490">
    <property type="component" value="Chromosome"/>
</dbReference>
<dbReference type="GO" id="GO:0005829">
    <property type="term" value="C:cytosol"/>
    <property type="evidence" value="ECO:0000318"/>
    <property type="project" value="GO_Central"/>
</dbReference>
<dbReference type="GO" id="GO:0004126">
    <property type="term" value="F:cytidine deaminase activity"/>
    <property type="evidence" value="ECO:0000318"/>
    <property type="project" value="GO_Central"/>
</dbReference>
<dbReference type="GO" id="GO:0042802">
    <property type="term" value="F:identical protein binding"/>
    <property type="evidence" value="ECO:0007669"/>
    <property type="project" value="UniProtKB-ARBA"/>
</dbReference>
<dbReference type="GO" id="GO:0008270">
    <property type="term" value="F:zinc ion binding"/>
    <property type="evidence" value="ECO:0000318"/>
    <property type="project" value="GO_Central"/>
</dbReference>
<dbReference type="GO" id="GO:0009972">
    <property type="term" value="P:cytidine deamination"/>
    <property type="evidence" value="ECO:0000318"/>
    <property type="project" value="GO_Central"/>
</dbReference>
<dbReference type="CDD" id="cd01283">
    <property type="entry name" value="cytidine_deaminase"/>
    <property type="match status" value="2"/>
</dbReference>
<dbReference type="FunFam" id="3.40.140.10:FF:000006">
    <property type="entry name" value="Cytidine deaminase"/>
    <property type="match status" value="1"/>
</dbReference>
<dbReference type="FunFam" id="3.40.140.10:FF:000007">
    <property type="entry name" value="Cytidine deaminase"/>
    <property type="match status" value="1"/>
</dbReference>
<dbReference type="Gene3D" id="3.40.140.10">
    <property type="entry name" value="Cytidine Deaminase, domain 2"/>
    <property type="match status" value="2"/>
</dbReference>
<dbReference type="HAMAP" id="MF_01558">
    <property type="entry name" value="Cyt_deam"/>
    <property type="match status" value="1"/>
</dbReference>
<dbReference type="InterPro" id="IPR016192">
    <property type="entry name" value="APOBEC/CMP_deaminase_Zn-bd"/>
</dbReference>
<dbReference type="InterPro" id="IPR002125">
    <property type="entry name" value="CMP_dCMP_dom"/>
</dbReference>
<dbReference type="InterPro" id="IPR013171">
    <property type="entry name" value="Cyd/dCyd_deaminase_Zn-bd"/>
</dbReference>
<dbReference type="InterPro" id="IPR050202">
    <property type="entry name" value="Cyt/Deoxycyt_deaminase"/>
</dbReference>
<dbReference type="InterPro" id="IPR006263">
    <property type="entry name" value="Cyt_deam_dimer"/>
</dbReference>
<dbReference type="InterPro" id="IPR016193">
    <property type="entry name" value="Cytidine_deaminase-like"/>
</dbReference>
<dbReference type="InterPro" id="IPR020797">
    <property type="entry name" value="Cytidine_deaminase_bacteria"/>
</dbReference>
<dbReference type="NCBIfam" id="TIGR01355">
    <property type="entry name" value="cyt_deam_dimer"/>
    <property type="match status" value="1"/>
</dbReference>
<dbReference type="NCBIfam" id="NF006537">
    <property type="entry name" value="PRK09027.1"/>
    <property type="match status" value="1"/>
</dbReference>
<dbReference type="PANTHER" id="PTHR11644">
    <property type="entry name" value="CYTIDINE DEAMINASE"/>
    <property type="match status" value="1"/>
</dbReference>
<dbReference type="PANTHER" id="PTHR11644:SF2">
    <property type="entry name" value="CYTIDINE DEAMINASE"/>
    <property type="match status" value="1"/>
</dbReference>
<dbReference type="Pfam" id="PF00383">
    <property type="entry name" value="dCMP_cyt_deam_1"/>
    <property type="match status" value="1"/>
</dbReference>
<dbReference type="Pfam" id="PF08211">
    <property type="entry name" value="dCMP_cyt_deam_2"/>
    <property type="match status" value="1"/>
</dbReference>
<dbReference type="PIRSF" id="PIRSF006334">
    <property type="entry name" value="Cdd_plus_pseudo"/>
    <property type="match status" value="1"/>
</dbReference>
<dbReference type="SUPFAM" id="SSF53927">
    <property type="entry name" value="Cytidine deaminase-like"/>
    <property type="match status" value="2"/>
</dbReference>
<dbReference type="PROSITE" id="PS00903">
    <property type="entry name" value="CYT_DCMP_DEAMINASES_1"/>
    <property type="match status" value="1"/>
</dbReference>
<dbReference type="PROSITE" id="PS51747">
    <property type="entry name" value="CYT_DCMP_DEAMINASES_2"/>
    <property type="match status" value="2"/>
</dbReference>
<name>CDD_YERPE</name>
<protein>
    <recommendedName>
        <fullName evidence="1">Cytidine deaminase</fullName>
        <ecNumber evidence="1">3.5.4.5</ecNumber>
    </recommendedName>
    <alternativeName>
        <fullName evidence="1">Cytidine aminohydrolase</fullName>
        <shortName evidence="1">CDA</shortName>
    </alternativeName>
</protein>
<proteinExistence type="inferred from homology"/>
<gene>
    <name evidence="1" type="primary">cdd</name>
    <name type="ordered locus">YPO1512</name>
    <name type="ordered locus">y2657</name>
    <name type="ordered locus">YP_1402</name>
</gene>
<keyword id="KW-0378">Hydrolase</keyword>
<keyword id="KW-0479">Metal-binding</keyword>
<keyword id="KW-1185">Reference proteome</keyword>
<keyword id="KW-0862">Zinc</keyword>
<evidence type="ECO:0000255" key="1">
    <source>
        <dbReference type="HAMAP-Rule" id="MF_01558"/>
    </source>
</evidence>
<evidence type="ECO:0000255" key="2">
    <source>
        <dbReference type="PROSITE-ProRule" id="PRU01083"/>
    </source>
</evidence>